<reference key="1">
    <citation type="submission" date="2001-06" db="EMBL/GenBank/DDBJ databases">
        <title>Identification of genes encoding exported proteins in Campylobacter jejuni and C. fetus.</title>
        <authorList>
            <person name="Thies F.L."/>
            <person name="Trotha R."/>
            <person name="Koenig W."/>
        </authorList>
    </citation>
    <scope>NUCLEOTIDE SEQUENCE [GENOMIC DNA]</scope>
    <source>
        <strain>ATCC 27374 / CIP 5396 / DSM 5361 / LMG 6442 / NCTC 10842</strain>
    </source>
</reference>
<proteinExistence type="inferred from homology"/>
<sequence>MKKILFVVATIFMALFLNAKENDMRNLKDIYLAGGCFWGTQAYFDKIRGVIKTDVGYANGKSDKTDYHSLHYSGHAETVHITFDENIVSLAEILAHYFRIIDPFSVNKQGNDVGSQYRTGIYYNDSSLKNSISEFIKHEQTKYDKKIAVEVEPLKNYVLAEDYHQKYLDKNPGGYCHVDLSLADKPLYNESKFKAPSKDELKAKLSDLQYSVTQEKATERPYSSEYDKFDKKGIYVDIVSKKPLFSSSDKFDAGCGWPSFTKPITTDALGYNRDLSHGMERVEVTSNLANSHLGHVFTDGPKDKGGLRYCINGASLKFIPLEDMEKEGYKDYIIYVK</sequence>
<accession>Q93KF3</accession>
<comment type="function">
    <text evidence="1">Has an important function as a repair enzyme for proteins that have been inactivated by oxidation. Catalyzes the reversible oxidation-reduction of methionine sulfoxide in proteins to methionine (By similarity).</text>
</comment>
<comment type="catalytic activity">
    <reaction>
        <text>L-methionyl-[protein] + [thioredoxin]-disulfide + H2O = L-methionyl-(S)-S-oxide-[protein] + [thioredoxin]-dithiol</text>
        <dbReference type="Rhea" id="RHEA:14217"/>
        <dbReference type="Rhea" id="RHEA-COMP:10698"/>
        <dbReference type="Rhea" id="RHEA-COMP:10700"/>
        <dbReference type="Rhea" id="RHEA-COMP:12313"/>
        <dbReference type="Rhea" id="RHEA-COMP:12315"/>
        <dbReference type="ChEBI" id="CHEBI:15377"/>
        <dbReference type="ChEBI" id="CHEBI:16044"/>
        <dbReference type="ChEBI" id="CHEBI:29950"/>
        <dbReference type="ChEBI" id="CHEBI:44120"/>
        <dbReference type="ChEBI" id="CHEBI:50058"/>
        <dbReference type="EC" id="1.8.4.11"/>
    </reaction>
</comment>
<comment type="catalytic activity">
    <reaction>
        <text>[thioredoxin]-disulfide + L-methionine + H2O = L-methionine (S)-S-oxide + [thioredoxin]-dithiol</text>
        <dbReference type="Rhea" id="RHEA:19993"/>
        <dbReference type="Rhea" id="RHEA-COMP:10698"/>
        <dbReference type="Rhea" id="RHEA-COMP:10700"/>
        <dbReference type="ChEBI" id="CHEBI:15377"/>
        <dbReference type="ChEBI" id="CHEBI:29950"/>
        <dbReference type="ChEBI" id="CHEBI:50058"/>
        <dbReference type="ChEBI" id="CHEBI:57844"/>
        <dbReference type="ChEBI" id="CHEBI:58772"/>
        <dbReference type="EC" id="1.8.4.11"/>
    </reaction>
</comment>
<comment type="catalytic activity">
    <reaction>
        <text>L-methionyl-[protein] + [thioredoxin]-disulfide + H2O = L-methionyl-(R)-S-oxide-[protein] + [thioredoxin]-dithiol</text>
        <dbReference type="Rhea" id="RHEA:24164"/>
        <dbReference type="Rhea" id="RHEA-COMP:10698"/>
        <dbReference type="Rhea" id="RHEA-COMP:10700"/>
        <dbReference type="Rhea" id="RHEA-COMP:12313"/>
        <dbReference type="Rhea" id="RHEA-COMP:12314"/>
        <dbReference type="ChEBI" id="CHEBI:15377"/>
        <dbReference type="ChEBI" id="CHEBI:16044"/>
        <dbReference type="ChEBI" id="CHEBI:29950"/>
        <dbReference type="ChEBI" id="CHEBI:45764"/>
        <dbReference type="ChEBI" id="CHEBI:50058"/>
        <dbReference type="EC" id="1.8.4.12"/>
    </reaction>
</comment>
<comment type="similarity">
    <text evidence="3">In the N-terminal section; belongs to the MsrA Met sulfoxide reductase family.</text>
</comment>
<comment type="similarity">
    <text evidence="3">In the C-terminal section; belongs to the MsrB Met sulfoxide reductase family.</text>
</comment>
<dbReference type="EC" id="1.8.4.11"/>
<dbReference type="EC" id="1.8.4.12"/>
<dbReference type="EMBL" id="AJ312325">
    <property type="protein sequence ID" value="CAC42492.1"/>
    <property type="molecule type" value="Genomic_DNA"/>
</dbReference>
<dbReference type="SMR" id="Q93KF3"/>
<dbReference type="GO" id="GO:0005737">
    <property type="term" value="C:cytoplasm"/>
    <property type="evidence" value="ECO:0007669"/>
    <property type="project" value="TreeGrafter"/>
</dbReference>
<dbReference type="GO" id="GO:0033744">
    <property type="term" value="F:L-methionine:thioredoxin-disulfide S-oxidoreductase activity"/>
    <property type="evidence" value="ECO:0007669"/>
    <property type="project" value="RHEA"/>
</dbReference>
<dbReference type="GO" id="GO:0033743">
    <property type="term" value="F:peptide-methionine (R)-S-oxide reductase activity"/>
    <property type="evidence" value="ECO:0007669"/>
    <property type="project" value="UniProtKB-UniRule"/>
</dbReference>
<dbReference type="GO" id="GO:0008113">
    <property type="term" value="F:peptide-methionine (S)-S-oxide reductase activity"/>
    <property type="evidence" value="ECO:0007669"/>
    <property type="project" value="UniProtKB-UniRule"/>
</dbReference>
<dbReference type="GO" id="GO:0036211">
    <property type="term" value="P:protein modification process"/>
    <property type="evidence" value="ECO:0007669"/>
    <property type="project" value="UniProtKB-UniRule"/>
</dbReference>
<dbReference type="GO" id="GO:0030091">
    <property type="term" value="P:protein repair"/>
    <property type="evidence" value="ECO:0007669"/>
    <property type="project" value="InterPro"/>
</dbReference>
<dbReference type="GO" id="GO:0006979">
    <property type="term" value="P:response to oxidative stress"/>
    <property type="evidence" value="ECO:0007669"/>
    <property type="project" value="InterPro"/>
</dbReference>
<dbReference type="FunFam" id="3.30.1060.10:FF:000007">
    <property type="entry name" value="Peptide methionine sulfoxide reductase msrA/msrB"/>
    <property type="match status" value="1"/>
</dbReference>
<dbReference type="FunFam" id="2.170.150.20:FF:000003">
    <property type="entry name" value="Peptide methionine sulfoxide reductase MsrB"/>
    <property type="match status" value="1"/>
</dbReference>
<dbReference type="Gene3D" id="2.170.150.20">
    <property type="entry name" value="Peptide methionine sulfoxide reductase"/>
    <property type="match status" value="1"/>
</dbReference>
<dbReference type="Gene3D" id="3.30.1060.10">
    <property type="entry name" value="Peptide methionine sulphoxide reductase MsrA"/>
    <property type="match status" value="1"/>
</dbReference>
<dbReference type="HAMAP" id="MF_01401">
    <property type="entry name" value="MsrA"/>
    <property type="match status" value="1"/>
</dbReference>
<dbReference type="HAMAP" id="MF_01400">
    <property type="entry name" value="MsrB"/>
    <property type="match status" value="1"/>
</dbReference>
<dbReference type="InterPro" id="IPR002569">
    <property type="entry name" value="Met_Sox_Rdtase_MsrA_dom"/>
</dbReference>
<dbReference type="InterPro" id="IPR036509">
    <property type="entry name" value="Met_Sox_Rdtase_MsrA_sf"/>
</dbReference>
<dbReference type="InterPro" id="IPR028427">
    <property type="entry name" value="Met_Sox_Rdtase_MsrB"/>
</dbReference>
<dbReference type="InterPro" id="IPR002579">
    <property type="entry name" value="Met_Sox_Rdtase_MsrB_dom"/>
</dbReference>
<dbReference type="InterPro" id="IPR011057">
    <property type="entry name" value="Mss4-like_sf"/>
</dbReference>
<dbReference type="NCBIfam" id="TIGR00401">
    <property type="entry name" value="msrA"/>
    <property type="match status" value="1"/>
</dbReference>
<dbReference type="NCBIfam" id="TIGR00357">
    <property type="entry name" value="peptide-methionine (R)-S-oxide reductase MsrB"/>
    <property type="match status" value="1"/>
</dbReference>
<dbReference type="PANTHER" id="PTHR10173">
    <property type="entry name" value="METHIONINE SULFOXIDE REDUCTASE"/>
    <property type="match status" value="1"/>
</dbReference>
<dbReference type="PANTHER" id="PTHR10173:SF52">
    <property type="entry name" value="METHIONINE-R-SULFOXIDE REDUCTASE B1"/>
    <property type="match status" value="1"/>
</dbReference>
<dbReference type="Pfam" id="PF01625">
    <property type="entry name" value="PMSR"/>
    <property type="match status" value="1"/>
</dbReference>
<dbReference type="Pfam" id="PF01641">
    <property type="entry name" value="SelR"/>
    <property type="match status" value="1"/>
</dbReference>
<dbReference type="SUPFAM" id="SSF51316">
    <property type="entry name" value="Mss4-like"/>
    <property type="match status" value="1"/>
</dbReference>
<dbReference type="SUPFAM" id="SSF55068">
    <property type="entry name" value="Peptide methionine sulfoxide reductase"/>
    <property type="match status" value="1"/>
</dbReference>
<dbReference type="PROSITE" id="PS51790">
    <property type="entry name" value="MSRB"/>
    <property type="match status" value="1"/>
</dbReference>
<gene>
    <name type="primary">msrAB</name>
    <name type="synonym">msrA</name>
</gene>
<name>MSRAB_CAMFE</name>
<feature type="chain" id="PRO_0000138512" description="Peptide methionine sulfoxide reductase MsrA/MsrB">
    <location>
        <begin position="1"/>
        <end position="337"/>
    </location>
</feature>
<feature type="domain" description="MsrB" evidence="2">
    <location>
        <begin position="198"/>
        <end position="321"/>
    </location>
</feature>
<feature type="region of interest" description="Peptide methionine sulfoxide reductase A">
    <location>
        <begin position="28"/>
        <end position="181"/>
    </location>
</feature>
<feature type="active site" evidence="1">
    <location>
        <position position="36"/>
    </location>
</feature>
<feature type="active site" description="Nucleophile" evidence="2">
    <location>
        <position position="310"/>
    </location>
</feature>
<organism>
    <name type="scientific">Campylobacter fetus</name>
    <dbReference type="NCBI Taxonomy" id="196"/>
    <lineage>
        <taxon>Bacteria</taxon>
        <taxon>Pseudomonadati</taxon>
        <taxon>Campylobacterota</taxon>
        <taxon>Epsilonproteobacteria</taxon>
        <taxon>Campylobacterales</taxon>
        <taxon>Campylobacteraceae</taxon>
        <taxon>Campylobacter</taxon>
    </lineage>
</organism>
<keyword id="KW-0511">Multifunctional enzyme</keyword>
<keyword id="KW-0560">Oxidoreductase</keyword>
<evidence type="ECO:0000250" key="1"/>
<evidence type="ECO:0000255" key="2">
    <source>
        <dbReference type="PROSITE-ProRule" id="PRU01126"/>
    </source>
</evidence>
<evidence type="ECO:0000305" key="3"/>
<protein>
    <recommendedName>
        <fullName>Peptide methionine sulfoxide reductase MsrA/MsrB</fullName>
    </recommendedName>
    <domain>
        <recommendedName>
            <fullName>Peptide methionine sulfoxide reductase MsrA</fullName>
            <shortName>Protein-methionine-S-oxide reductase</shortName>
            <ecNumber>1.8.4.11</ecNumber>
        </recommendedName>
        <alternativeName>
            <fullName>Peptide-methionine (S)-S-oxide reductase</fullName>
            <shortName>Peptide Met(O) reductase</shortName>
        </alternativeName>
    </domain>
    <domain>
        <recommendedName>
            <fullName>Peptide methionine sulfoxide reductase MsrB</fullName>
            <ecNumber>1.8.4.12</ecNumber>
        </recommendedName>
        <alternativeName>
            <fullName>Peptide-methionine (R)-S-oxide reductase</fullName>
        </alternativeName>
    </domain>
</protein>